<sequence length="225" mass="25343">MDFIKGLWRDLRARPVDTLVRWQEQRFLWLLMAIAMGGLIILAHSFFQIYLYMAPCEQCVYIRYAMFVMVIGGVIAAINPKNIVLKLIGCIAAFYGSIMGIKFSIKLNGIHHAVHNADPDSLFGVQGCSTDPTFPFNLPLAEWAPEWFKPTGDCGYDAPIVPDGVTLSSVQQWFVDLYQQSEGWYLLPPWHFMNMAQACMLAFGLCLILLLVMSGAWALKLARGK</sequence>
<feature type="chain" id="PRO_0000059390" description="Protein-disulfide oxidoreductase DsbI">
    <location>
        <begin position="1"/>
        <end position="225"/>
    </location>
</feature>
<feature type="transmembrane region" description="Helical" evidence="1">
    <location>
        <begin position="27"/>
        <end position="47"/>
    </location>
</feature>
<feature type="transmembrane region" description="Helical" evidence="1">
    <location>
        <begin position="65"/>
        <end position="85"/>
    </location>
</feature>
<feature type="transmembrane region" description="Helical" evidence="1">
    <location>
        <begin position="87"/>
        <end position="107"/>
    </location>
</feature>
<feature type="transmembrane region" description="Helical" evidence="1">
    <location>
        <begin position="199"/>
        <end position="219"/>
    </location>
</feature>
<feature type="disulfide bond" description="Redox-active" evidence="1">
    <location>
        <begin position="56"/>
        <end position="59"/>
    </location>
</feature>
<feature type="disulfide bond" description="Redox-active" evidence="1">
    <location>
        <begin position="128"/>
        <end position="154"/>
    </location>
</feature>
<gene>
    <name evidence="1" type="primary">dsbI</name>
    <name type="ordered locus">STY3372</name>
    <name type="ordered locus">t3114</name>
</gene>
<proteinExistence type="inferred from homology"/>
<protein>
    <recommendedName>
        <fullName evidence="1">Protein-disulfide oxidoreductase DsbI</fullName>
    </recommendedName>
</protein>
<organism>
    <name type="scientific">Salmonella typhi</name>
    <dbReference type="NCBI Taxonomy" id="90370"/>
    <lineage>
        <taxon>Bacteria</taxon>
        <taxon>Pseudomonadati</taxon>
        <taxon>Pseudomonadota</taxon>
        <taxon>Gammaproteobacteria</taxon>
        <taxon>Enterobacterales</taxon>
        <taxon>Enterobacteriaceae</taxon>
        <taxon>Salmonella</taxon>
    </lineage>
</organism>
<accession>P0A1H2</accession>
<accession>Q8XEK0</accession>
<reference key="1">
    <citation type="journal article" date="2001" name="Nature">
        <title>Complete genome sequence of a multiple drug resistant Salmonella enterica serovar Typhi CT18.</title>
        <authorList>
            <person name="Parkhill J."/>
            <person name="Dougan G."/>
            <person name="James K.D."/>
            <person name="Thomson N.R."/>
            <person name="Pickard D."/>
            <person name="Wain J."/>
            <person name="Churcher C.M."/>
            <person name="Mungall K.L."/>
            <person name="Bentley S.D."/>
            <person name="Holden M.T.G."/>
            <person name="Sebaihia M."/>
            <person name="Baker S."/>
            <person name="Basham D."/>
            <person name="Brooks K."/>
            <person name="Chillingworth T."/>
            <person name="Connerton P."/>
            <person name="Cronin A."/>
            <person name="Davis P."/>
            <person name="Davies R.M."/>
            <person name="Dowd L."/>
            <person name="White N."/>
            <person name="Farrar J."/>
            <person name="Feltwell T."/>
            <person name="Hamlin N."/>
            <person name="Haque A."/>
            <person name="Hien T.T."/>
            <person name="Holroyd S."/>
            <person name="Jagels K."/>
            <person name="Krogh A."/>
            <person name="Larsen T.S."/>
            <person name="Leather S."/>
            <person name="Moule S."/>
            <person name="O'Gaora P."/>
            <person name="Parry C."/>
            <person name="Quail M.A."/>
            <person name="Rutherford K.M."/>
            <person name="Simmonds M."/>
            <person name="Skelton J."/>
            <person name="Stevens K."/>
            <person name="Whitehead S."/>
            <person name="Barrell B.G."/>
        </authorList>
    </citation>
    <scope>NUCLEOTIDE SEQUENCE [LARGE SCALE GENOMIC DNA]</scope>
    <source>
        <strain>CT18</strain>
    </source>
</reference>
<reference key="2">
    <citation type="journal article" date="2003" name="J. Bacteriol.">
        <title>Comparative genomics of Salmonella enterica serovar Typhi strains Ty2 and CT18.</title>
        <authorList>
            <person name="Deng W."/>
            <person name="Liou S.-R."/>
            <person name="Plunkett G. III"/>
            <person name="Mayhew G.F."/>
            <person name="Rose D.J."/>
            <person name="Burland V."/>
            <person name="Kodoyianni V."/>
            <person name="Schwartz D.C."/>
            <person name="Blattner F.R."/>
        </authorList>
    </citation>
    <scope>NUCLEOTIDE SEQUENCE [LARGE SCALE GENOMIC DNA]</scope>
    <source>
        <strain>ATCC 700931 / Ty2</strain>
    </source>
</reference>
<dbReference type="EMBL" id="AL513382">
    <property type="protein sequence ID" value="CAD07719.1"/>
    <property type="molecule type" value="Genomic_DNA"/>
</dbReference>
<dbReference type="EMBL" id="AE014613">
    <property type="protein sequence ID" value="AAO70657.1"/>
    <property type="molecule type" value="Genomic_DNA"/>
</dbReference>
<dbReference type="RefSeq" id="NP_457585.1">
    <property type="nucleotide sequence ID" value="NC_003198.1"/>
</dbReference>
<dbReference type="RefSeq" id="WP_000345576.1">
    <property type="nucleotide sequence ID" value="NZ_WSUR01000003.1"/>
</dbReference>
<dbReference type="STRING" id="220341.gene:17587228"/>
<dbReference type="KEGG" id="stt:t3114"/>
<dbReference type="KEGG" id="sty:STY3372"/>
<dbReference type="PATRIC" id="fig|220341.7.peg.3433"/>
<dbReference type="eggNOG" id="COG1495">
    <property type="taxonomic scope" value="Bacteria"/>
</dbReference>
<dbReference type="HOGENOM" id="CLU_090583_1_0_6"/>
<dbReference type="OMA" id="CGYDNPI"/>
<dbReference type="OrthoDB" id="3711263at2"/>
<dbReference type="Proteomes" id="UP000000541">
    <property type="component" value="Chromosome"/>
</dbReference>
<dbReference type="Proteomes" id="UP000002670">
    <property type="component" value="Chromosome"/>
</dbReference>
<dbReference type="GO" id="GO:0005886">
    <property type="term" value="C:plasma membrane"/>
    <property type="evidence" value="ECO:0007669"/>
    <property type="project" value="UniProtKB-SubCell"/>
</dbReference>
<dbReference type="GO" id="GO:0015035">
    <property type="term" value="F:protein-disulfide reductase activity"/>
    <property type="evidence" value="ECO:0007669"/>
    <property type="project" value="UniProtKB-UniRule"/>
</dbReference>
<dbReference type="GO" id="GO:0006457">
    <property type="term" value="P:protein folding"/>
    <property type="evidence" value="ECO:0007669"/>
    <property type="project" value="InterPro"/>
</dbReference>
<dbReference type="Gene3D" id="1.20.1550.10">
    <property type="entry name" value="DsbB-like"/>
    <property type="match status" value="1"/>
</dbReference>
<dbReference type="HAMAP" id="MF_01311">
    <property type="entry name" value="DsbI"/>
    <property type="match status" value="1"/>
</dbReference>
<dbReference type="InterPro" id="IPR003752">
    <property type="entry name" value="DiS_bond_form_DsbB/BdbC"/>
</dbReference>
<dbReference type="InterPro" id="IPR023792">
    <property type="entry name" value="DiS_OxRdtase_Dsbl"/>
</dbReference>
<dbReference type="InterPro" id="IPR050183">
    <property type="entry name" value="DsbB"/>
</dbReference>
<dbReference type="InterPro" id="IPR023380">
    <property type="entry name" value="DsbB-like_sf"/>
</dbReference>
<dbReference type="NCBIfam" id="NF003304">
    <property type="entry name" value="PRK04307.1"/>
    <property type="match status" value="1"/>
</dbReference>
<dbReference type="PANTHER" id="PTHR36570">
    <property type="entry name" value="DISULFIDE BOND FORMATION PROTEIN B"/>
    <property type="match status" value="1"/>
</dbReference>
<dbReference type="PANTHER" id="PTHR36570:SF1">
    <property type="entry name" value="PROTEIN-DISULFIDE OXIDOREDUCTASE DSBI"/>
    <property type="match status" value="1"/>
</dbReference>
<dbReference type="Pfam" id="PF02600">
    <property type="entry name" value="DsbB"/>
    <property type="match status" value="1"/>
</dbReference>
<dbReference type="SUPFAM" id="SSF158442">
    <property type="entry name" value="DsbB-like"/>
    <property type="match status" value="1"/>
</dbReference>
<name>DSBI_SALTI</name>
<comment type="function">
    <text evidence="1">Required for disulfide bond formation in some proteins. Part of a redox system composed of DsbI and DsbL that mediates formation of an essential disulfide bond in AssT.</text>
</comment>
<comment type="subunit">
    <text evidence="1">Interacts with DsbL.</text>
</comment>
<comment type="subcellular location">
    <subcellularLocation>
        <location evidence="1">Cell inner membrane</location>
        <topology evidence="1">Multi-pass membrane protein</topology>
    </subcellularLocation>
</comment>
<comment type="similarity">
    <text evidence="1">Belongs to the DsbB family. DsbI subfamily.</text>
</comment>
<keyword id="KW-0997">Cell inner membrane</keyword>
<keyword id="KW-1003">Cell membrane</keyword>
<keyword id="KW-1015">Disulfide bond</keyword>
<keyword id="KW-0249">Electron transport</keyword>
<keyword id="KW-0472">Membrane</keyword>
<keyword id="KW-0560">Oxidoreductase</keyword>
<keyword id="KW-0676">Redox-active center</keyword>
<keyword id="KW-0812">Transmembrane</keyword>
<keyword id="KW-1133">Transmembrane helix</keyword>
<keyword id="KW-0813">Transport</keyword>
<evidence type="ECO:0000255" key="1">
    <source>
        <dbReference type="HAMAP-Rule" id="MF_01311"/>
    </source>
</evidence>